<feature type="chain" id="PRO_1000115654" description="V-type ATP synthase beta chain">
    <location>
        <begin position="1"/>
        <end position="459"/>
    </location>
</feature>
<name>VATB_CLOBA</name>
<protein>
    <recommendedName>
        <fullName evidence="1">V-type ATP synthase beta chain</fullName>
    </recommendedName>
    <alternativeName>
        <fullName evidence="1">V-ATPase subunit B</fullName>
    </alternativeName>
</protein>
<comment type="function">
    <text evidence="1">Produces ATP from ADP in the presence of a proton gradient across the membrane. The V-type beta chain is a regulatory subunit.</text>
</comment>
<comment type="similarity">
    <text evidence="1">Belongs to the ATPase alpha/beta chains family.</text>
</comment>
<reference key="1">
    <citation type="submission" date="2008-05" db="EMBL/GenBank/DDBJ databases">
        <title>Complete genome sequence of Clostridium botulinum E3 str. Alaska E43.</title>
        <authorList>
            <person name="Brinkac L.M."/>
            <person name="Brown J.L."/>
            <person name="Bruce D."/>
            <person name="Detter C."/>
            <person name="Munk C."/>
            <person name="Smith L.A."/>
            <person name="Smith T.J."/>
            <person name="Sutton G."/>
            <person name="Brettin T.S."/>
        </authorList>
    </citation>
    <scope>NUCLEOTIDE SEQUENCE [LARGE SCALE GENOMIC DNA]</scope>
    <source>
        <strain>Alaska E43 / Type E3</strain>
    </source>
</reference>
<evidence type="ECO:0000255" key="1">
    <source>
        <dbReference type="HAMAP-Rule" id="MF_00310"/>
    </source>
</evidence>
<keyword id="KW-0066">ATP synthesis</keyword>
<keyword id="KW-0375">Hydrogen ion transport</keyword>
<keyword id="KW-0406">Ion transport</keyword>
<keyword id="KW-0813">Transport</keyword>
<gene>
    <name evidence="1" type="primary">atpB</name>
    <name type="ordered locus">CLH_2588</name>
</gene>
<proteinExistence type="inferred from homology"/>
<sequence>MLKEYRTVTEVVGPLMVVEGVEGVKYDELVEIELHTGEKRRGKVLEVNGSKAMVQIFEGSSGINLKGTKAKFLGRPLELGVSEDMLGRVFDGMGRPNDNGPDIIPEKRVDINGEAINPMARDFPSEFIQTGVSAIDGLNTLVRGQKLPVFSAAGLPHAELAAQIARQAKVLNSDSKFAIVFAAIGITFEEAQFFQDEFKRTGAIDRSVLFMNLASDPAIERIATPRMALTCAEYLAYEKGMQVLVIMTDITNYAEALREISAARKEVPGRRGYPGYLYTDLSTLYERAGRLRGKEGSITQIPILTMPEDDKTHPIPDLTGYITEGQIILSRELYKKGIMPPIDVLPSLSRLKDKGIGKGKTREDHADTMNQLFAAYSQGKQAKELSAILGESALSDTDKKLAKFAEAFEDEYVSQGFNTNRTIEETLNLGWKLLKMLPRTELKRIRDEYLEKYMPREEE</sequence>
<organism>
    <name type="scientific">Clostridium botulinum (strain Alaska E43 / Type E3)</name>
    <dbReference type="NCBI Taxonomy" id="508767"/>
    <lineage>
        <taxon>Bacteria</taxon>
        <taxon>Bacillati</taxon>
        <taxon>Bacillota</taxon>
        <taxon>Clostridia</taxon>
        <taxon>Eubacteriales</taxon>
        <taxon>Clostridiaceae</taxon>
        <taxon>Clostridium</taxon>
    </lineage>
</organism>
<accession>B2UWY3</accession>
<dbReference type="EMBL" id="CP001078">
    <property type="protein sequence ID" value="ACD52032.1"/>
    <property type="molecule type" value="Genomic_DNA"/>
</dbReference>
<dbReference type="RefSeq" id="WP_003370262.1">
    <property type="nucleotide sequence ID" value="NC_010723.1"/>
</dbReference>
<dbReference type="SMR" id="B2UWY3"/>
<dbReference type="KEGG" id="cbt:CLH_2588"/>
<dbReference type="HOGENOM" id="CLU_022916_0_0_9"/>
<dbReference type="GO" id="GO:0045259">
    <property type="term" value="C:proton-transporting ATP synthase complex"/>
    <property type="evidence" value="ECO:0007669"/>
    <property type="project" value="UniProtKB-ARBA"/>
</dbReference>
<dbReference type="GO" id="GO:0005524">
    <property type="term" value="F:ATP binding"/>
    <property type="evidence" value="ECO:0007669"/>
    <property type="project" value="UniProtKB-UniRule"/>
</dbReference>
<dbReference type="GO" id="GO:0046933">
    <property type="term" value="F:proton-transporting ATP synthase activity, rotational mechanism"/>
    <property type="evidence" value="ECO:0007669"/>
    <property type="project" value="UniProtKB-UniRule"/>
</dbReference>
<dbReference type="GO" id="GO:0042777">
    <property type="term" value="P:proton motive force-driven plasma membrane ATP synthesis"/>
    <property type="evidence" value="ECO:0007669"/>
    <property type="project" value="UniProtKB-UniRule"/>
</dbReference>
<dbReference type="CDD" id="cd18112">
    <property type="entry name" value="ATP-synt_V_A-type_beta_C"/>
    <property type="match status" value="1"/>
</dbReference>
<dbReference type="CDD" id="cd18118">
    <property type="entry name" value="ATP-synt_V_A-type_beta_N"/>
    <property type="match status" value="1"/>
</dbReference>
<dbReference type="CDD" id="cd01135">
    <property type="entry name" value="V_A-ATPase_B"/>
    <property type="match status" value="1"/>
</dbReference>
<dbReference type="Gene3D" id="3.40.50.12240">
    <property type="match status" value="1"/>
</dbReference>
<dbReference type="HAMAP" id="MF_00310">
    <property type="entry name" value="ATP_synth_B_arch"/>
    <property type="match status" value="1"/>
</dbReference>
<dbReference type="InterPro" id="IPR055190">
    <property type="entry name" value="ATP-synt_VA_C"/>
</dbReference>
<dbReference type="InterPro" id="IPR020003">
    <property type="entry name" value="ATPase_a/bsu_AS"/>
</dbReference>
<dbReference type="InterPro" id="IPR004100">
    <property type="entry name" value="ATPase_F1/V1/A1_a/bsu_N"/>
</dbReference>
<dbReference type="InterPro" id="IPR036121">
    <property type="entry name" value="ATPase_F1/V1/A1_a/bsu_N_sf"/>
</dbReference>
<dbReference type="InterPro" id="IPR000194">
    <property type="entry name" value="ATPase_F1/V1/A1_a/bsu_nucl-bd"/>
</dbReference>
<dbReference type="InterPro" id="IPR027417">
    <property type="entry name" value="P-loop_NTPase"/>
</dbReference>
<dbReference type="InterPro" id="IPR022879">
    <property type="entry name" value="V-ATPase_su_B/beta"/>
</dbReference>
<dbReference type="NCBIfam" id="NF003235">
    <property type="entry name" value="PRK04196.1"/>
    <property type="match status" value="1"/>
</dbReference>
<dbReference type="PANTHER" id="PTHR43389">
    <property type="entry name" value="V-TYPE PROTON ATPASE SUBUNIT B"/>
    <property type="match status" value="1"/>
</dbReference>
<dbReference type="PANTHER" id="PTHR43389:SF4">
    <property type="entry name" value="V-TYPE PROTON ATPASE SUBUNIT B"/>
    <property type="match status" value="1"/>
</dbReference>
<dbReference type="Pfam" id="PF00006">
    <property type="entry name" value="ATP-synt_ab"/>
    <property type="match status" value="1"/>
</dbReference>
<dbReference type="Pfam" id="PF02874">
    <property type="entry name" value="ATP-synt_ab_N"/>
    <property type="match status" value="1"/>
</dbReference>
<dbReference type="Pfam" id="PF22919">
    <property type="entry name" value="ATP-synt_VA_C"/>
    <property type="match status" value="1"/>
</dbReference>
<dbReference type="PIRSF" id="PIRSF039114">
    <property type="entry name" value="V-ATPsynth_beta/V-ATPase_B"/>
    <property type="match status" value="1"/>
</dbReference>
<dbReference type="SUPFAM" id="SSF47917">
    <property type="entry name" value="C-terminal domain of alpha and beta subunits of F1 ATP synthase"/>
    <property type="match status" value="1"/>
</dbReference>
<dbReference type="SUPFAM" id="SSF50615">
    <property type="entry name" value="N-terminal domain of alpha and beta subunits of F1 ATP synthase"/>
    <property type="match status" value="1"/>
</dbReference>
<dbReference type="SUPFAM" id="SSF52540">
    <property type="entry name" value="P-loop containing nucleoside triphosphate hydrolases"/>
    <property type="match status" value="1"/>
</dbReference>
<dbReference type="PROSITE" id="PS00152">
    <property type="entry name" value="ATPASE_ALPHA_BETA"/>
    <property type="match status" value="1"/>
</dbReference>